<organismHost>
    <name type="scientific">Homo sapiens</name>
    <name type="common">Human</name>
    <dbReference type="NCBI Taxonomy" id="9606"/>
</organismHost>
<sequence>MTMNKPKTNYAGYACCVICGLIVGIIFTATLLKAVERKLIHTPLIDKTIKDAYIREDCPTD</sequence>
<name>A40_VAR67</name>
<feature type="chain" id="PRO_0000412624" description="Protein A40 homolog">
    <location>
        <begin position="1"/>
        <end position="61"/>
    </location>
</feature>
<feature type="topological domain" description="Cytoplasmic" evidence="2">
    <location>
        <begin position="1"/>
        <end position="11"/>
    </location>
</feature>
<feature type="transmembrane region" description="Helical; Signal-anchor for type II membrane protein" evidence="2">
    <location>
        <begin position="12"/>
        <end position="32"/>
    </location>
</feature>
<feature type="topological domain" description="Extracellular" evidence="2">
    <location>
        <begin position="33"/>
        <end position="61"/>
    </location>
</feature>
<organism>
    <name type="scientific">Variola virus (isolate Human/India/Ind3/1967)</name>
    <name type="common">VARV</name>
    <name type="synonym">Smallpox virus</name>
    <dbReference type="NCBI Taxonomy" id="587200"/>
    <lineage>
        <taxon>Viruses</taxon>
        <taxon>Varidnaviria</taxon>
        <taxon>Bamfordvirae</taxon>
        <taxon>Nucleocytoviricota</taxon>
        <taxon>Pokkesviricetes</taxon>
        <taxon>Chitovirales</taxon>
        <taxon>Poxviridae</taxon>
        <taxon>Chordopoxvirinae</taxon>
        <taxon>Orthopoxvirus</taxon>
        <taxon>Variola virus</taxon>
    </lineage>
</organism>
<keyword id="KW-0244">Early protein</keyword>
<keyword id="KW-1043">Host membrane</keyword>
<keyword id="KW-0472">Membrane</keyword>
<keyword id="KW-1185">Reference proteome</keyword>
<keyword id="KW-0735">Signal-anchor</keyword>
<keyword id="KW-0812">Transmembrane</keyword>
<keyword id="KW-1133">Transmembrane helix</keyword>
<proteinExistence type="inferred from homology"/>
<accession>Q89186</accession>
<protein>
    <recommendedName>
        <fullName>Protein A40 homolog</fullName>
    </recommendedName>
</protein>
<reference key="1">
    <citation type="journal article" date="1993" name="FEBS Lett.">
        <title>Genes of variola and vaccinia viruses necessary to overcome the host protective mechanisms.</title>
        <authorList>
            <person name="Shchelkunov S.N."/>
            <person name="Blinov V.M."/>
            <person name="Sandakhchiev L.S."/>
        </authorList>
    </citation>
    <scope>NUCLEOTIDE SEQUENCE [GENOMIC DNA]</scope>
</reference>
<reference key="2">
    <citation type="journal article" date="1994" name="Virus Res.">
        <title>Analysis of the nucleotide sequence of 53 kbp from the right terminus of the genome of variola major virus strain India-1967.</title>
        <authorList>
            <person name="Shchelkunov S.N."/>
            <person name="Blinov V.M."/>
            <person name="Resenchuk S.M."/>
            <person name="Totmenin A.V."/>
            <person name="Olenina L.V."/>
            <person name="Chirikova G.B."/>
            <person name="Sandakhchiev L.S."/>
        </authorList>
    </citation>
    <scope>NUCLEOTIDE SEQUENCE [GENOMIC DNA]</scope>
</reference>
<reference key="3">
    <citation type="journal article" date="1995" name="Virus Genes">
        <title>Two types of deletions in orthopoxvirus genomes.</title>
        <authorList>
            <person name="Shchelkunov S.N."/>
            <person name="Totmenin A.V."/>
        </authorList>
    </citation>
    <scope>NUCLEOTIDE SEQUENCE [GENOMIC DNA]</scope>
</reference>
<reference key="4">
    <citation type="journal article" date="1996" name="Virus Res.">
        <title>Analysis of the nucleotide sequence of 23.8 kbp from the left terminus of the genome of variola major virus strain India-1967.</title>
        <authorList>
            <person name="Shchelkunov S.N."/>
            <person name="Totmenin A.V."/>
            <person name="Sandakhchiev L.S."/>
        </authorList>
    </citation>
    <scope>NUCLEOTIDE SEQUENCE [GENOMIC DNA]</scope>
</reference>
<dbReference type="EMBL" id="X69198">
    <property type="protein sequence ID" value="CAA49092.1"/>
    <property type="molecule type" value="Genomic_DNA"/>
</dbReference>
<dbReference type="PIR" id="A36853">
    <property type="entry name" value="A36853"/>
</dbReference>
<dbReference type="RefSeq" id="NP_042195.1">
    <property type="nucleotide sequence ID" value="NC_001611.1"/>
</dbReference>
<dbReference type="SMR" id="Q89186"/>
<dbReference type="GeneID" id="1486526"/>
<dbReference type="KEGG" id="vg:1486526"/>
<dbReference type="Proteomes" id="UP000002060">
    <property type="component" value="Segment"/>
</dbReference>
<dbReference type="GO" id="GO:0033644">
    <property type="term" value="C:host cell membrane"/>
    <property type="evidence" value="ECO:0007669"/>
    <property type="project" value="UniProtKB-SubCell"/>
</dbReference>
<dbReference type="GO" id="GO:0016020">
    <property type="term" value="C:membrane"/>
    <property type="evidence" value="ECO:0007669"/>
    <property type="project" value="UniProtKB-KW"/>
</dbReference>
<gene>
    <name type="primary">A45R</name>
</gene>
<evidence type="ECO:0000250" key="1"/>
<evidence type="ECO:0000255" key="2"/>
<evidence type="ECO:0000305" key="3"/>
<comment type="subcellular location">
    <subcellularLocation>
        <location evidence="3">Host membrane</location>
        <topology evidence="3">Single-pass type II membrane protein</topology>
    </subcellularLocation>
    <text evidence="1">Not detected in virion membranes.</text>
</comment>
<comment type="miscellaneous">
    <text>The variola A45R protein corresponds to the N-terminal region of the vaccinia A40 protein.</text>
</comment>
<comment type="similarity">
    <text evidence="3">Belongs to the poxviridae A40 protein family.</text>
</comment>